<reference key="1">
    <citation type="journal article" date="1995" name="Development">
        <title>Multiple roles for FGF-3 during cranial neural development in the chicken.</title>
        <authorList>
            <person name="Mahmood R."/>
            <person name="Kiefer P."/>
            <person name="Guthrie S."/>
            <person name="Dickson C."/>
            <person name="Mason I."/>
        </authorList>
    </citation>
    <scope>NUCLEOTIDE SEQUENCE [MRNA]</scope>
    <source>
        <strain>Rhode Island red</strain>
        <tissue>Embryo</tissue>
    </source>
</reference>
<proteinExistence type="evidence at transcript level"/>
<sequence>MLVIWLLLLALLPEPRVPAATASPRAPRDAGGRGGVYEHLGGAPRRRKLYCATKYHLQIHPGGKINGTLEKNSVFSILEITAVDVGIVAIKGLFSGRYLAMNKRGRLYASENYNTECEFVERIHELGYNTYASRLYRTVPSGASTKRKASAERLWYVSVNGKGRPRRGFKTRRTQKSSLFLPRVLDSKDHEMVRLFHTNVRYRESLLKPPSKNQRRRRGR</sequence>
<dbReference type="EMBL" id="Z47555">
    <property type="protein sequence ID" value="CAA87635.1"/>
    <property type="molecule type" value="mRNA"/>
</dbReference>
<dbReference type="PIR" id="I50588">
    <property type="entry name" value="I50588"/>
</dbReference>
<dbReference type="RefSeq" id="NP_990658.1">
    <property type="nucleotide sequence ID" value="NM_205327.2"/>
</dbReference>
<dbReference type="SMR" id="P48801"/>
<dbReference type="FunCoup" id="P48801">
    <property type="interactions" value="155"/>
</dbReference>
<dbReference type="STRING" id="9031.ENSGALP00000042296"/>
<dbReference type="GlyCosmos" id="P48801">
    <property type="glycosylation" value="1 site, No reported glycans"/>
</dbReference>
<dbReference type="GlyGen" id="P48801">
    <property type="glycosylation" value="1 site"/>
</dbReference>
<dbReference type="PaxDb" id="9031-ENSGALP00000042296"/>
<dbReference type="Ensembl" id="ENSGALT00010062201.1">
    <property type="protein sequence ID" value="ENSGALP00010038444.1"/>
    <property type="gene ID" value="ENSGALG00010025487.1"/>
</dbReference>
<dbReference type="GeneID" id="396267"/>
<dbReference type="KEGG" id="gga:396267"/>
<dbReference type="CTD" id="2248"/>
<dbReference type="VEuPathDB" id="HostDB:geneid_396267"/>
<dbReference type="eggNOG" id="KOG3885">
    <property type="taxonomic scope" value="Eukaryota"/>
</dbReference>
<dbReference type="GeneTree" id="ENSGT00940000161128"/>
<dbReference type="HOGENOM" id="CLU_081609_1_0_1"/>
<dbReference type="InParanoid" id="P48801"/>
<dbReference type="OMA" id="YHLQIHA"/>
<dbReference type="OrthoDB" id="6158176at2759"/>
<dbReference type="PhylomeDB" id="P48801"/>
<dbReference type="Reactome" id="R-GGA-109704">
    <property type="pathway name" value="PI3K Cascade"/>
</dbReference>
<dbReference type="Reactome" id="R-GGA-1257604">
    <property type="pathway name" value="PIP3 activates AKT signaling"/>
</dbReference>
<dbReference type="Reactome" id="R-GGA-190370">
    <property type="pathway name" value="FGFR1b ligand binding and activation"/>
</dbReference>
<dbReference type="Reactome" id="R-GGA-190377">
    <property type="pathway name" value="FGFR2b ligand binding and activation"/>
</dbReference>
<dbReference type="Reactome" id="R-GGA-5654219">
    <property type="pathway name" value="Phospholipase C-mediated cascade: FGFR1"/>
</dbReference>
<dbReference type="Reactome" id="R-GGA-5654221">
    <property type="pathway name" value="Phospholipase C-mediated cascade, FGFR2"/>
</dbReference>
<dbReference type="Reactome" id="R-GGA-5654687">
    <property type="pathway name" value="Downstream signaling of activated FGFR1"/>
</dbReference>
<dbReference type="Reactome" id="R-GGA-5654688">
    <property type="pathway name" value="SHC-mediated cascade:FGFR1"/>
</dbReference>
<dbReference type="Reactome" id="R-GGA-5654689">
    <property type="pathway name" value="PI-3K cascade:FGFR1"/>
</dbReference>
<dbReference type="Reactome" id="R-GGA-5654693">
    <property type="pathway name" value="FRS-mediated FGFR1 signaling"/>
</dbReference>
<dbReference type="Reactome" id="R-GGA-5654695">
    <property type="pathway name" value="PI-3K cascade:FGFR2"/>
</dbReference>
<dbReference type="Reactome" id="R-GGA-5654699">
    <property type="pathway name" value="SHC-mediated cascade:FGFR2"/>
</dbReference>
<dbReference type="Reactome" id="R-GGA-5654700">
    <property type="pathway name" value="FRS-mediated FGFR2 signaling"/>
</dbReference>
<dbReference type="Reactome" id="R-GGA-5654726">
    <property type="pathway name" value="Negative regulation of FGFR1 signaling"/>
</dbReference>
<dbReference type="Reactome" id="R-GGA-5654727">
    <property type="pathway name" value="Negative regulation of FGFR2 signaling"/>
</dbReference>
<dbReference type="Reactome" id="R-GGA-5658623">
    <property type="pathway name" value="FGFRL1 modulation of FGFR1 signaling"/>
</dbReference>
<dbReference type="Reactome" id="R-GGA-5673001">
    <property type="pathway name" value="RAF/MAP kinase cascade"/>
</dbReference>
<dbReference type="Reactome" id="R-GGA-6811558">
    <property type="pathway name" value="PI5P, PP2A and IER3 Regulate PI3K/AKT Signaling"/>
</dbReference>
<dbReference type="PRO" id="PR:P48801"/>
<dbReference type="Proteomes" id="UP000000539">
    <property type="component" value="Chromosome 5"/>
</dbReference>
<dbReference type="GO" id="GO:0005737">
    <property type="term" value="C:cytoplasm"/>
    <property type="evidence" value="ECO:0000318"/>
    <property type="project" value="GO_Central"/>
</dbReference>
<dbReference type="GO" id="GO:0005615">
    <property type="term" value="C:extracellular space"/>
    <property type="evidence" value="ECO:0000318"/>
    <property type="project" value="GO_Central"/>
</dbReference>
<dbReference type="GO" id="GO:0005104">
    <property type="term" value="F:fibroblast growth factor receptor binding"/>
    <property type="evidence" value="ECO:0000318"/>
    <property type="project" value="GO_Central"/>
</dbReference>
<dbReference type="GO" id="GO:0008083">
    <property type="term" value="F:growth factor activity"/>
    <property type="evidence" value="ECO:0000318"/>
    <property type="project" value="GO_Central"/>
</dbReference>
<dbReference type="GO" id="GO:0008543">
    <property type="term" value="P:fibroblast growth factor receptor signaling pathway"/>
    <property type="evidence" value="ECO:0000318"/>
    <property type="project" value="GO_Central"/>
</dbReference>
<dbReference type="GO" id="GO:0055026">
    <property type="term" value="P:negative regulation of cardiac muscle tissue development"/>
    <property type="evidence" value="ECO:0007669"/>
    <property type="project" value="Ensembl"/>
</dbReference>
<dbReference type="GO" id="GO:0022008">
    <property type="term" value="P:neurogenesis"/>
    <property type="evidence" value="ECO:0000318"/>
    <property type="project" value="GO_Central"/>
</dbReference>
<dbReference type="GO" id="GO:0051781">
    <property type="term" value="P:positive regulation of cell division"/>
    <property type="evidence" value="ECO:0007669"/>
    <property type="project" value="UniProtKB-KW"/>
</dbReference>
<dbReference type="GO" id="GO:0008284">
    <property type="term" value="P:positive regulation of cell population proliferation"/>
    <property type="evidence" value="ECO:0000318"/>
    <property type="project" value="GO_Central"/>
</dbReference>
<dbReference type="GO" id="GO:0043410">
    <property type="term" value="P:positive regulation of MAPK cascade"/>
    <property type="evidence" value="ECO:0000318"/>
    <property type="project" value="GO_Central"/>
</dbReference>
<dbReference type="GO" id="GO:0030334">
    <property type="term" value="P:regulation of cell migration"/>
    <property type="evidence" value="ECO:0000318"/>
    <property type="project" value="GO_Central"/>
</dbReference>
<dbReference type="CDD" id="cd23315">
    <property type="entry name" value="beta-trefoil_FGF3"/>
    <property type="match status" value="1"/>
</dbReference>
<dbReference type="FunFam" id="2.80.10.50:FF:000060">
    <property type="entry name" value="Fibroblast growth factor"/>
    <property type="match status" value="1"/>
</dbReference>
<dbReference type="Gene3D" id="2.80.10.50">
    <property type="match status" value="1"/>
</dbReference>
<dbReference type="InterPro" id="IPR002209">
    <property type="entry name" value="Fibroblast_GF_fam"/>
</dbReference>
<dbReference type="InterPro" id="IPR008996">
    <property type="entry name" value="IL1/FGF"/>
</dbReference>
<dbReference type="PANTHER" id="PTHR11486">
    <property type="entry name" value="FIBROBLAST GROWTH FACTOR"/>
    <property type="match status" value="1"/>
</dbReference>
<dbReference type="Pfam" id="PF00167">
    <property type="entry name" value="FGF"/>
    <property type="match status" value="1"/>
</dbReference>
<dbReference type="PRINTS" id="PR00263">
    <property type="entry name" value="HBGFFGF"/>
</dbReference>
<dbReference type="PRINTS" id="PR00262">
    <property type="entry name" value="IL1HBGF"/>
</dbReference>
<dbReference type="SMART" id="SM00442">
    <property type="entry name" value="FGF"/>
    <property type="match status" value="1"/>
</dbReference>
<dbReference type="SUPFAM" id="SSF50353">
    <property type="entry name" value="Cytokine"/>
    <property type="match status" value="1"/>
</dbReference>
<dbReference type="PROSITE" id="PS00247">
    <property type="entry name" value="HBGF_FGF"/>
    <property type="match status" value="1"/>
</dbReference>
<feature type="signal peptide" evidence="2">
    <location>
        <begin position="1"/>
        <end position="19"/>
    </location>
</feature>
<feature type="chain" id="PRO_0000008949" description="Fibroblast growth factor 3">
    <location>
        <begin position="20"/>
        <end position="220"/>
    </location>
</feature>
<feature type="region of interest" description="Disordered" evidence="3">
    <location>
        <begin position="19"/>
        <end position="40"/>
    </location>
</feature>
<feature type="glycosylation site" description="N-linked (GlcNAc...) asparagine" evidence="2">
    <location>
        <position position="66"/>
    </location>
</feature>
<accession>P48801</accession>
<name>FGF3_CHICK</name>
<comment type="function">
    <text evidence="1">Plays an important role in the regulation of embryonic development, cell proliferation, and cell differentiation.</text>
</comment>
<comment type="subcellular location">
    <subcellularLocation>
        <location evidence="4">Secreted</location>
    </subcellularLocation>
</comment>
<comment type="similarity">
    <text evidence="4">Belongs to the heparin-binding growth factors family.</text>
</comment>
<keyword id="KW-0217">Developmental protein</keyword>
<keyword id="KW-0221">Differentiation</keyword>
<keyword id="KW-0325">Glycoprotein</keyword>
<keyword id="KW-0339">Growth factor</keyword>
<keyword id="KW-0497">Mitogen</keyword>
<keyword id="KW-1185">Reference proteome</keyword>
<keyword id="KW-0964">Secreted</keyword>
<keyword id="KW-0732">Signal</keyword>
<organism>
    <name type="scientific">Gallus gallus</name>
    <name type="common">Chicken</name>
    <dbReference type="NCBI Taxonomy" id="9031"/>
    <lineage>
        <taxon>Eukaryota</taxon>
        <taxon>Metazoa</taxon>
        <taxon>Chordata</taxon>
        <taxon>Craniata</taxon>
        <taxon>Vertebrata</taxon>
        <taxon>Euteleostomi</taxon>
        <taxon>Archelosauria</taxon>
        <taxon>Archosauria</taxon>
        <taxon>Dinosauria</taxon>
        <taxon>Saurischia</taxon>
        <taxon>Theropoda</taxon>
        <taxon>Coelurosauria</taxon>
        <taxon>Aves</taxon>
        <taxon>Neognathae</taxon>
        <taxon>Galloanserae</taxon>
        <taxon>Galliformes</taxon>
        <taxon>Phasianidae</taxon>
        <taxon>Phasianinae</taxon>
        <taxon>Gallus</taxon>
    </lineage>
</organism>
<protein>
    <recommendedName>
        <fullName>Fibroblast growth factor 3</fullName>
        <shortName>FGF-3</shortName>
    </recommendedName>
    <alternativeName>
        <fullName>Heparin-binding growth factor 3</fullName>
        <shortName>HBGF-3</shortName>
    </alternativeName>
</protein>
<evidence type="ECO:0000250" key="1"/>
<evidence type="ECO:0000255" key="2"/>
<evidence type="ECO:0000256" key="3">
    <source>
        <dbReference type="SAM" id="MobiDB-lite"/>
    </source>
</evidence>
<evidence type="ECO:0000305" key="4"/>
<gene>
    <name type="primary">FGF3</name>
    <name type="synonym">FGF-3</name>
</gene>